<feature type="chain" id="PRO_0000205406" description="cAMP-dependent protein kinase regulatory subunit">
    <location>
        <begin position="1"/>
        <end position="404"/>
    </location>
</feature>
<feature type="region of interest" description="Dimerization and phosphorylation" evidence="2">
    <location>
        <begin position="14"/>
        <end position="144"/>
    </location>
</feature>
<feature type="binding site">
    <location>
        <begin position="145"/>
        <end position="276"/>
    </location>
    <ligand>
        <name>3',5'-cyclic AMP</name>
        <dbReference type="ChEBI" id="CHEBI:58165"/>
        <label>1</label>
    </ligand>
</feature>
<feature type="binding site" evidence="1">
    <location>
        <position position="223"/>
    </location>
    <ligand>
        <name>3',5'-cyclic AMP</name>
        <dbReference type="ChEBI" id="CHEBI:58165"/>
        <label>1</label>
    </ligand>
</feature>
<feature type="binding site" evidence="1">
    <location>
        <position position="232"/>
    </location>
    <ligand>
        <name>3',5'-cyclic AMP</name>
        <dbReference type="ChEBI" id="CHEBI:58165"/>
        <label>1</label>
    </ligand>
</feature>
<feature type="binding site">
    <location>
        <begin position="277"/>
        <end position="398"/>
    </location>
    <ligand>
        <name>3',5'-cyclic AMP</name>
        <dbReference type="ChEBI" id="CHEBI:58165"/>
        <label>2</label>
    </ligand>
</feature>
<feature type="binding site" evidence="1">
    <location>
        <position position="344"/>
    </location>
    <ligand>
        <name>3',5'-cyclic AMP</name>
        <dbReference type="ChEBI" id="CHEBI:58165"/>
        <label>2</label>
    </ligand>
</feature>
<feature type="binding site" evidence="1">
    <location>
        <position position="353"/>
    </location>
    <ligand>
        <name>3',5'-cyclic AMP</name>
        <dbReference type="ChEBI" id="CHEBI:58165"/>
        <label>2</label>
    </ligand>
</feature>
<feature type="modified residue" description="Phosphoserine" evidence="1">
    <location>
        <position position="105"/>
    </location>
</feature>
<proteinExistence type="inferred from homology"/>
<dbReference type="EMBL" id="AF046922">
    <property type="protein sequence ID" value="AAC04356.1"/>
    <property type="molecule type" value="Genomic_DNA"/>
</dbReference>
<dbReference type="SMR" id="O42794"/>
<dbReference type="GO" id="GO:0005952">
    <property type="term" value="C:cAMP-dependent protein kinase complex"/>
    <property type="evidence" value="ECO:0007669"/>
    <property type="project" value="InterPro"/>
</dbReference>
<dbReference type="GO" id="GO:0005829">
    <property type="term" value="C:cytosol"/>
    <property type="evidence" value="ECO:0007669"/>
    <property type="project" value="TreeGrafter"/>
</dbReference>
<dbReference type="GO" id="GO:0005634">
    <property type="term" value="C:nucleus"/>
    <property type="evidence" value="ECO:0007669"/>
    <property type="project" value="TreeGrafter"/>
</dbReference>
<dbReference type="GO" id="GO:0030552">
    <property type="term" value="F:cAMP binding"/>
    <property type="evidence" value="ECO:0007669"/>
    <property type="project" value="UniProtKB-KW"/>
</dbReference>
<dbReference type="GO" id="GO:0004862">
    <property type="term" value="F:cAMP-dependent protein kinase inhibitor activity"/>
    <property type="evidence" value="ECO:0007669"/>
    <property type="project" value="TreeGrafter"/>
</dbReference>
<dbReference type="GO" id="GO:0034236">
    <property type="term" value="F:protein kinase A catalytic subunit binding"/>
    <property type="evidence" value="ECO:0007669"/>
    <property type="project" value="TreeGrafter"/>
</dbReference>
<dbReference type="CDD" id="cd00038">
    <property type="entry name" value="CAP_ED"/>
    <property type="match status" value="2"/>
</dbReference>
<dbReference type="FunFam" id="2.60.120.10:FF:000039">
    <property type="entry name" value="cAMP-dependent protein kinase regulatory subunit"/>
    <property type="match status" value="1"/>
</dbReference>
<dbReference type="Gene3D" id="2.60.120.10">
    <property type="entry name" value="Jelly Rolls"/>
    <property type="match status" value="2"/>
</dbReference>
<dbReference type="InterPro" id="IPR050503">
    <property type="entry name" value="cAMP-dep_PK_reg_su-like"/>
</dbReference>
<dbReference type="InterPro" id="IPR012198">
    <property type="entry name" value="cAMP_dep_PK_reg_su"/>
</dbReference>
<dbReference type="InterPro" id="IPR018488">
    <property type="entry name" value="cNMP-bd_CS"/>
</dbReference>
<dbReference type="InterPro" id="IPR000595">
    <property type="entry name" value="cNMP-bd_dom"/>
</dbReference>
<dbReference type="InterPro" id="IPR018490">
    <property type="entry name" value="cNMP-bd_dom_sf"/>
</dbReference>
<dbReference type="InterPro" id="IPR014710">
    <property type="entry name" value="RmlC-like_jellyroll"/>
</dbReference>
<dbReference type="PANTHER" id="PTHR11635">
    <property type="entry name" value="CAMP-DEPENDENT PROTEIN KINASE REGULATORY CHAIN"/>
    <property type="match status" value="1"/>
</dbReference>
<dbReference type="PANTHER" id="PTHR11635:SF152">
    <property type="entry name" value="CAMP-DEPENDENT PROTEIN KINASE TYPE I REGULATORY SUBUNIT-RELATED"/>
    <property type="match status" value="1"/>
</dbReference>
<dbReference type="Pfam" id="PF00027">
    <property type="entry name" value="cNMP_binding"/>
    <property type="match status" value="2"/>
</dbReference>
<dbReference type="PIRSF" id="PIRSF000548">
    <property type="entry name" value="PK_regulatory"/>
    <property type="match status" value="1"/>
</dbReference>
<dbReference type="PRINTS" id="PR00103">
    <property type="entry name" value="CAMPKINASE"/>
</dbReference>
<dbReference type="SMART" id="SM00100">
    <property type="entry name" value="cNMP"/>
    <property type="match status" value="1"/>
</dbReference>
<dbReference type="SUPFAM" id="SSF51206">
    <property type="entry name" value="cAMP-binding domain-like"/>
    <property type="match status" value="2"/>
</dbReference>
<dbReference type="PROSITE" id="PS00888">
    <property type="entry name" value="CNMP_BINDING_1"/>
    <property type="match status" value="1"/>
</dbReference>
<dbReference type="PROSITE" id="PS00889">
    <property type="entry name" value="CNMP_BINDING_2"/>
    <property type="match status" value="2"/>
</dbReference>
<dbReference type="PROSITE" id="PS50042">
    <property type="entry name" value="CNMP_BINDING_3"/>
    <property type="match status" value="2"/>
</dbReference>
<organism>
    <name type="scientific">Colletotrichum trifolii</name>
    <dbReference type="NCBI Taxonomy" id="5466"/>
    <lineage>
        <taxon>Eukaryota</taxon>
        <taxon>Fungi</taxon>
        <taxon>Dikarya</taxon>
        <taxon>Ascomycota</taxon>
        <taxon>Pezizomycotina</taxon>
        <taxon>Sordariomycetes</taxon>
        <taxon>Hypocreomycetidae</taxon>
        <taxon>Glomerellales</taxon>
        <taxon>Glomerellaceae</taxon>
        <taxon>Colletotrichum</taxon>
        <taxon>Colletotrichum orbiculare species complex</taxon>
    </lineage>
</organism>
<accession>O42794</accession>
<name>KAPR_COLTR</name>
<sequence>MAFPTYRPVQCSKLTDHELLRIPHSPSLEPLDYCIEPISYLRRTVYDLHTTVANRSSSRALLHKQPPVMFKSPFGANANPFGGASDGATVGGNAMHQYNFSRRTSVSAESLKPSADTYDNWTPPVHDKTNEQLSRLKTAIAGNFLFSHLDDEQSAQILGALIEKPIPAKDIKVISQGDAGEYFYVVEKGSFDVYVNEKGTLQPGPEGMGEKVGTIQAGGSFGELALMYNAPRAATVISAEPGCTLWALDRLTFRRILMESTFLAAACTRTSSEKFPCCRHSHHMSAQKSPTRWKLRSTPLVRRLSRRETRVTRFTCSRWRGRCLPGEMARESVKHYSKGDFFGELALLNDAPRAASIVATTDVKVASLGKSAFQRLLGPVEGIMRRTKYDDIKTGVEEMDPLQV</sequence>
<keyword id="KW-0114">cAMP</keyword>
<keyword id="KW-0116">cAMP-binding</keyword>
<keyword id="KW-0547">Nucleotide-binding</keyword>
<keyword id="KW-0597">Phosphoprotein</keyword>
<keyword id="KW-0677">Repeat</keyword>
<reference key="1">
    <citation type="journal article" date="1999" name="Arch. Microbiol.">
        <title>Molecular cloning and characterization of Ct-PKAR, a gene encoding the regulatory subunit of cAMP-dependent protein kinase in Colletotrichum trifolii.</title>
        <authorList>
            <person name="Yang Z."/>
            <person name="Dickman M.B."/>
        </authorList>
    </citation>
    <scope>NUCLEOTIDE SEQUENCE [GENOMIC DNA]</scope>
    <scope>FUNCTION</scope>
</reference>
<protein>
    <recommendedName>
        <fullName>cAMP-dependent protein kinase regulatory subunit</fullName>
        <shortName>PKA regulatory subunit</shortName>
    </recommendedName>
</protein>
<gene>
    <name type="primary">PKAR</name>
</gene>
<comment type="function">
    <text evidence="3">cAMP-dependent protein kinase PKA regulatory subunit.</text>
</comment>
<comment type="subunit">
    <text evidence="1">Tetramer, composed of 2 regulatory (R) and 2 catalytic (C) subunits. In the presence of cAMP it dissociates into 2 active monomeric C subunits and an R dimer (By similarity).</text>
</comment>
<comment type="similarity">
    <text evidence="4">Belongs to the cAMP-dependent kinase regulatory chain family.</text>
</comment>
<evidence type="ECO:0000250" key="1"/>
<evidence type="ECO:0000255" key="2"/>
<evidence type="ECO:0000269" key="3">
    <source>
    </source>
</evidence>
<evidence type="ECO:0000305" key="4"/>